<reference key="1">
    <citation type="submission" date="2006-04" db="EMBL/GenBank/DDBJ databases">
        <authorList>
            <consortium name="NIH - Mammalian Gene Collection (MGC) project"/>
        </authorList>
    </citation>
    <scope>NUCLEOTIDE SEQUENCE [LARGE SCALE MRNA]</scope>
    <source>
        <strain>Hereford</strain>
        <tissue>Thymus</tissue>
    </source>
</reference>
<evidence type="ECO:0000250" key="1">
    <source>
        <dbReference type="UniProtKB" id="P32529"/>
    </source>
</evidence>
<evidence type="ECO:0000250" key="2">
    <source>
        <dbReference type="UniProtKB" id="Q9P1U0"/>
    </source>
</evidence>
<evidence type="ECO:0000250" key="3">
    <source>
        <dbReference type="UniProtKB" id="Q9Y2Y1"/>
    </source>
</evidence>
<evidence type="ECO:0000255" key="4"/>
<evidence type="ECO:0000255" key="5">
    <source>
        <dbReference type="PROSITE-ProRule" id="PRU00472"/>
    </source>
</evidence>
<evidence type="ECO:0000255" key="6">
    <source>
        <dbReference type="PROSITE-ProRule" id="PRU10145"/>
    </source>
</evidence>
<evidence type="ECO:0000305" key="7"/>
<dbReference type="EMBL" id="BC114799">
    <property type="protein sequence ID" value="AAI14800.1"/>
    <property type="molecule type" value="mRNA"/>
</dbReference>
<dbReference type="RefSeq" id="NP_001039865.1">
    <property type="nucleotide sequence ID" value="NM_001046400.2"/>
</dbReference>
<dbReference type="SMR" id="Q1RMP0"/>
<dbReference type="FunCoup" id="Q1RMP0">
    <property type="interactions" value="3716"/>
</dbReference>
<dbReference type="STRING" id="9913.ENSBTAP00000042491"/>
<dbReference type="PaxDb" id="9913-ENSBTAP00000042491"/>
<dbReference type="GeneID" id="535288"/>
<dbReference type="KEGG" id="bta:535288"/>
<dbReference type="CTD" id="30834"/>
<dbReference type="VEuPathDB" id="HostDB:ENSBTAG00000031792"/>
<dbReference type="eggNOG" id="KOG2907">
    <property type="taxonomic scope" value="Eukaryota"/>
</dbReference>
<dbReference type="HOGENOM" id="CLU_093932_1_2_1"/>
<dbReference type="InParanoid" id="Q1RMP0"/>
<dbReference type="OMA" id="EMQYHTL"/>
<dbReference type="OrthoDB" id="10056816at2759"/>
<dbReference type="TreeFam" id="TF313881"/>
<dbReference type="Reactome" id="R-BTA-5250924">
    <property type="pathway name" value="B-WICH complex positively regulates rRNA expression"/>
</dbReference>
<dbReference type="Reactome" id="R-BTA-73762">
    <property type="pathway name" value="RNA Polymerase I Transcription Initiation"/>
</dbReference>
<dbReference type="Reactome" id="R-BTA-73772">
    <property type="pathway name" value="RNA Polymerase I Promoter Escape"/>
</dbReference>
<dbReference type="Reactome" id="R-BTA-73863">
    <property type="pathway name" value="RNA Polymerase I Transcription Termination"/>
</dbReference>
<dbReference type="Proteomes" id="UP000009136">
    <property type="component" value="Chromosome 23"/>
</dbReference>
<dbReference type="Bgee" id="ENSBTAG00000031792">
    <property type="expression patterns" value="Expressed in oocyte and 107 other cell types or tissues"/>
</dbReference>
<dbReference type="GO" id="GO:0005736">
    <property type="term" value="C:RNA polymerase I complex"/>
    <property type="evidence" value="ECO:0000318"/>
    <property type="project" value="GO_Central"/>
</dbReference>
<dbReference type="GO" id="GO:0003899">
    <property type="term" value="F:DNA-directed RNA polymerase activity"/>
    <property type="evidence" value="ECO:0007669"/>
    <property type="project" value="InterPro"/>
</dbReference>
<dbReference type="GO" id="GO:0003676">
    <property type="term" value="F:nucleic acid binding"/>
    <property type="evidence" value="ECO:0007669"/>
    <property type="project" value="InterPro"/>
</dbReference>
<dbReference type="GO" id="GO:0008270">
    <property type="term" value="F:zinc ion binding"/>
    <property type="evidence" value="ECO:0007669"/>
    <property type="project" value="UniProtKB-KW"/>
</dbReference>
<dbReference type="GO" id="GO:0006363">
    <property type="term" value="P:termination of RNA polymerase I transcription"/>
    <property type="evidence" value="ECO:0000318"/>
    <property type="project" value="GO_Central"/>
</dbReference>
<dbReference type="CDD" id="cd10507">
    <property type="entry name" value="Zn-ribbon_RPA12"/>
    <property type="match status" value="1"/>
</dbReference>
<dbReference type="FunFam" id="2.20.25.10:FF:000020">
    <property type="entry name" value="DNA-directed RNA polymerase subunit"/>
    <property type="match status" value="1"/>
</dbReference>
<dbReference type="Gene3D" id="2.20.25.10">
    <property type="match status" value="1"/>
</dbReference>
<dbReference type="InterPro" id="IPR019761">
    <property type="entry name" value="DNA-dir_RNA_pol-M_15_CS"/>
</dbReference>
<dbReference type="InterPro" id="IPR012164">
    <property type="entry name" value="Rpa12/Rpb9/Rpc10/TFS"/>
</dbReference>
<dbReference type="InterPro" id="IPR034004">
    <property type="entry name" value="Zn_ribbon_RPA12_C"/>
</dbReference>
<dbReference type="InterPro" id="IPR001222">
    <property type="entry name" value="Znf_TFIIS"/>
</dbReference>
<dbReference type="PANTHER" id="PTHR11239">
    <property type="entry name" value="DNA-DIRECTED RNA POLYMERASE"/>
    <property type="match status" value="1"/>
</dbReference>
<dbReference type="PANTHER" id="PTHR11239:SF14">
    <property type="entry name" value="DNA-DIRECTED RNA POLYMERASE I SUBUNIT RPA12"/>
    <property type="match status" value="1"/>
</dbReference>
<dbReference type="Pfam" id="PF01096">
    <property type="entry name" value="Zn_ribbon_TFIIS"/>
    <property type="match status" value="1"/>
</dbReference>
<dbReference type="PIRSF" id="PIRSF005586">
    <property type="entry name" value="RNApol_RpoM"/>
    <property type="match status" value="1"/>
</dbReference>
<dbReference type="SMART" id="SM00440">
    <property type="entry name" value="ZnF_C2C2"/>
    <property type="match status" value="1"/>
</dbReference>
<dbReference type="SUPFAM" id="SSF57783">
    <property type="entry name" value="Zinc beta-ribbon"/>
    <property type="match status" value="1"/>
</dbReference>
<dbReference type="PROSITE" id="PS01030">
    <property type="entry name" value="RNA_POL_M_15KD"/>
    <property type="match status" value="1"/>
</dbReference>
<dbReference type="PROSITE" id="PS00466">
    <property type="entry name" value="ZF_TFIIS_1"/>
    <property type="match status" value="1"/>
</dbReference>
<dbReference type="PROSITE" id="PS51133">
    <property type="entry name" value="ZF_TFIIS_2"/>
    <property type="match status" value="1"/>
</dbReference>
<comment type="function">
    <text evidence="2">Core component of RNA polymerase I (Pol I), a DNA-dependent RNA polymerase which synthesizes ribosomal RNA precursors using the four ribonucleoside triphosphates as substrates. Can mediate Pol I proofreading of the nascent RNA transcript. Anchors into the Pol I active site to monitor transcription fidelity and cleave mis-incorporated 5'-ribonucleotides.</text>
</comment>
<comment type="subunit">
    <text>Component of the RNA polymerase I (Pol I) complex consisting of at least 13 subunits.</text>
</comment>
<comment type="subcellular location">
    <subcellularLocation>
        <location evidence="1">Nucleus</location>
        <location evidence="1">Nucleolus</location>
    </subcellularLocation>
</comment>
<comment type="domain">
    <text evidence="2 3">The TFIIS-type zinc-binding beta-ribbon domain contains an acidic hairpin motif (residues Asp-103, Glu-104) that likely coordinates the nucleophilic water and magnesium to cleave the scissile phosphodiester bond and release the mis-incorporated 5'-ribonucleotides.</text>
</comment>
<comment type="similarity">
    <text evidence="7">Belongs to the archaeal RpoM/eukaryotic RPA12/RPB9/RPC11 RNA polymerase family.</text>
</comment>
<protein>
    <recommendedName>
        <fullName evidence="2">DNA-directed RNA polymerase I subunit RPA12</fullName>
    </recommendedName>
    <alternativeName>
        <fullName evidence="2">DNA-directed RNA polymerase I subunit H</fullName>
    </alternativeName>
</protein>
<organism>
    <name type="scientific">Bos taurus</name>
    <name type="common">Bovine</name>
    <dbReference type="NCBI Taxonomy" id="9913"/>
    <lineage>
        <taxon>Eukaryota</taxon>
        <taxon>Metazoa</taxon>
        <taxon>Chordata</taxon>
        <taxon>Craniata</taxon>
        <taxon>Vertebrata</taxon>
        <taxon>Euteleostomi</taxon>
        <taxon>Mammalia</taxon>
        <taxon>Eutheria</taxon>
        <taxon>Laurasiatheria</taxon>
        <taxon>Artiodactyla</taxon>
        <taxon>Ruminantia</taxon>
        <taxon>Pecora</taxon>
        <taxon>Bovidae</taxon>
        <taxon>Bovinae</taxon>
        <taxon>Bos</taxon>
    </lineage>
</organism>
<sequence>MDLAGICSSFQSDLDFCPDCGSVLPLPGVQDAVACTRCGFSINVRDFEGKVVKTSVVFNKLGTAMPLSMEEGPEFQGPVVDRRCSRCGHEGMAYHTRQMRSADEGQTVFYTCTNCKFQEKEDS</sequence>
<feature type="chain" id="PRO_0000245339" description="DNA-directed RNA polymerase I subunit RPA12">
    <location>
        <begin position="1"/>
        <end position="123"/>
    </location>
</feature>
<feature type="zinc finger region" description="C4-type" evidence="4">
    <location>
        <begin position="17"/>
        <end position="38"/>
    </location>
</feature>
<feature type="zinc finger region" description="TFIIS-type" evidence="5">
    <location>
        <begin position="80"/>
        <end position="120"/>
    </location>
</feature>
<feature type="short sequence motif" description="Hairpin" evidence="2 3">
    <location>
        <begin position="103"/>
        <end position="104"/>
    </location>
</feature>
<feature type="binding site" evidence="6">
    <location>
        <position position="17"/>
    </location>
    <ligand>
        <name>Zn(2+)</name>
        <dbReference type="ChEBI" id="CHEBI:29105"/>
        <label>1</label>
    </ligand>
</feature>
<feature type="binding site" evidence="6">
    <location>
        <position position="20"/>
    </location>
    <ligand>
        <name>Zn(2+)</name>
        <dbReference type="ChEBI" id="CHEBI:29105"/>
        <label>1</label>
    </ligand>
</feature>
<feature type="binding site" evidence="6">
    <location>
        <position position="35"/>
    </location>
    <ligand>
        <name>Zn(2+)</name>
        <dbReference type="ChEBI" id="CHEBI:29105"/>
        <label>1</label>
    </ligand>
</feature>
<feature type="binding site" evidence="6">
    <location>
        <position position="38"/>
    </location>
    <ligand>
        <name>Zn(2+)</name>
        <dbReference type="ChEBI" id="CHEBI:29105"/>
        <label>1</label>
    </ligand>
</feature>
<feature type="binding site" evidence="5">
    <location>
        <position position="84"/>
    </location>
    <ligand>
        <name>Zn(2+)</name>
        <dbReference type="ChEBI" id="CHEBI:29105"/>
        <label>2</label>
    </ligand>
</feature>
<feature type="binding site" evidence="5">
    <location>
        <position position="87"/>
    </location>
    <ligand>
        <name>Zn(2+)</name>
        <dbReference type="ChEBI" id="CHEBI:29105"/>
        <label>2</label>
    </ligand>
</feature>
<feature type="binding site" evidence="5">
    <location>
        <position position="112"/>
    </location>
    <ligand>
        <name>Zn(2+)</name>
        <dbReference type="ChEBI" id="CHEBI:29105"/>
        <label>2</label>
    </ligand>
</feature>
<feature type="binding site" evidence="5">
    <location>
        <position position="115"/>
    </location>
    <ligand>
        <name>Zn(2+)</name>
        <dbReference type="ChEBI" id="CHEBI:29105"/>
        <label>2</label>
    </ligand>
</feature>
<accession>Q1RMP0</accession>
<proteinExistence type="evidence at transcript level"/>
<gene>
    <name evidence="2" type="primary">POLR1H</name>
</gene>
<name>RPA12_BOVIN</name>
<keyword id="KW-0240">DNA-directed RNA polymerase</keyword>
<keyword id="KW-0479">Metal-binding</keyword>
<keyword id="KW-0539">Nucleus</keyword>
<keyword id="KW-1185">Reference proteome</keyword>
<keyword id="KW-0804">Transcription</keyword>
<keyword id="KW-0862">Zinc</keyword>
<keyword id="KW-0863">Zinc-finger</keyword>